<comment type="function">
    <text evidence="2">GTP hydrolase that promotes the GTP-dependent binding of aminoacyl-tRNA to the A-site of ribosomes during protein biosynthesis.</text>
</comment>
<comment type="catalytic activity">
    <reaction evidence="2">
        <text>GTP + H2O = GDP + phosphate + H(+)</text>
        <dbReference type="Rhea" id="RHEA:19669"/>
        <dbReference type="ChEBI" id="CHEBI:15377"/>
        <dbReference type="ChEBI" id="CHEBI:15378"/>
        <dbReference type="ChEBI" id="CHEBI:37565"/>
        <dbReference type="ChEBI" id="CHEBI:43474"/>
        <dbReference type="ChEBI" id="CHEBI:58189"/>
        <dbReference type="EC" id="3.6.5.3"/>
    </reaction>
    <physiologicalReaction direction="left-to-right" evidence="2">
        <dbReference type="Rhea" id="RHEA:19670"/>
    </physiologicalReaction>
</comment>
<comment type="subunit">
    <text evidence="2">Monomer.</text>
</comment>
<comment type="subcellular location">
    <subcellularLocation>
        <location evidence="2">Cytoplasm</location>
    </subcellularLocation>
</comment>
<comment type="similarity">
    <text evidence="2">Belongs to the TRAFAC class translation factor GTPase superfamily. Classic translation factor GTPase family. EF-Tu/EF-1A subfamily.</text>
</comment>
<gene>
    <name evidence="2" type="primary">tuf2</name>
    <name type="synonym">tufB</name>
    <name type="ordered locus">PTH_0318</name>
</gene>
<proteinExistence type="inferred from homology"/>
<sequence>MAKQKFERTKPHVNIGTIGHVDHGKTTLTAAITMVLATVGKAQVKKYDKIDNAPEERERGITINTAHVEYETEKRHYAHVDCPGHADYVKNMITGAAQMDGAILVVSAADGPMPQTREHILLARQVGVPYIVVYLNKADMVDDPELLELVDMEVRELLSTYEFPGDEIPIITGSALKAMECACGKRECEWCKSIWELMDAVDEYIPTPQRAVDKPFLMPVEDVFSITGRGTVATGRIERGQVKVGDEVEIVGLQDKPRKTVVTGVEMFRKILDVGVAGDNVGCLLRGVDRKEIERGQVLAKPGSIKPHKSFSAEVYVLTKEEGGRHTPFFNGYRPQFYFRTTDVTGVVKLPEGVEMVMPGDNVRIDIDLITPIAIEEGLRFAIREGGRTVGAGVVTGIRE</sequence>
<evidence type="ECO:0000250" key="1"/>
<evidence type="ECO:0000255" key="2">
    <source>
        <dbReference type="HAMAP-Rule" id="MF_00118"/>
    </source>
</evidence>
<keyword id="KW-0963">Cytoplasm</keyword>
<keyword id="KW-0251">Elongation factor</keyword>
<keyword id="KW-0342">GTP-binding</keyword>
<keyword id="KW-0378">Hydrolase</keyword>
<keyword id="KW-0460">Magnesium</keyword>
<keyword id="KW-0479">Metal-binding</keyword>
<keyword id="KW-0547">Nucleotide-binding</keyword>
<keyword id="KW-0648">Protein biosynthesis</keyword>
<keyword id="KW-1185">Reference proteome</keyword>
<protein>
    <recommendedName>
        <fullName evidence="2">Elongation factor Tu 2</fullName>
        <shortName evidence="2">EF-Tu 2</shortName>
        <ecNumber evidence="2">3.6.5.3</ecNumber>
    </recommendedName>
</protein>
<accession>A5D5I8</accession>
<reference key="1">
    <citation type="journal article" date="2008" name="Genome Res.">
        <title>The genome of Pelotomaculum thermopropionicum reveals niche-associated evolution in anaerobic microbiota.</title>
        <authorList>
            <person name="Kosaka T."/>
            <person name="Kato S."/>
            <person name="Shimoyama T."/>
            <person name="Ishii S."/>
            <person name="Abe T."/>
            <person name="Watanabe K."/>
        </authorList>
    </citation>
    <scope>NUCLEOTIDE SEQUENCE [LARGE SCALE GENOMIC DNA]</scope>
    <source>
        <strain>DSM 13744 / JCM 10971 / SI</strain>
    </source>
</reference>
<name>EFTU2_PELTS</name>
<dbReference type="EC" id="3.6.5.3" evidence="2"/>
<dbReference type="EMBL" id="AP009389">
    <property type="protein sequence ID" value="BAF58499.1"/>
    <property type="molecule type" value="Genomic_DNA"/>
</dbReference>
<dbReference type="SMR" id="A5D5I8"/>
<dbReference type="STRING" id="370438.PTH_0318"/>
<dbReference type="KEGG" id="pth:PTH_0318"/>
<dbReference type="eggNOG" id="COG0050">
    <property type="taxonomic scope" value="Bacteria"/>
</dbReference>
<dbReference type="HOGENOM" id="CLU_007265_0_0_9"/>
<dbReference type="Proteomes" id="UP000006556">
    <property type="component" value="Chromosome"/>
</dbReference>
<dbReference type="GO" id="GO:0005829">
    <property type="term" value="C:cytosol"/>
    <property type="evidence" value="ECO:0007669"/>
    <property type="project" value="TreeGrafter"/>
</dbReference>
<dbReference type="GO" id="GO:0005525">
    <property type="term" value="F:GTP binding"/>
    <property type="evidence" value="ECO:0007669"/>
    <property type="project" value="UniProtKB-UniRule"/>
</dbReference>
<dbReference type="GO" id="GO:0003924">
    <property type="term" value="F:GTPase activity"/>
    <property type="evidence" value="ECO:0007669"/>
    <property type="project" value="InterPro"/>
</dbReference>
<dbReference type="GO" id="GO:0003746">
    <property type="term" value="F:translation elongation factor activity"/>
    <property type="evidence" value="ECO:0007669"/>
    <property type="project" value="UniProtKB-UniRule"/>
</dbReference>
<dbReference type="CDD" id="cd01884">
    <property type="entry name" value="EF_Tu"/>
    <property type="match status" value="1"/>
</dbReference>
<dbReference type="CDD" id="cd03697">
    <property type="entry name" value="EFTU_II"/>
    <property type="match status" value="1"/>
</dbReference>
<dbReference type="CDD" id="cd03707">
    <property type="entry name" value="EFTU_III"/>
    <property type="match status" value="1"/>
</dbReference>
<dbReference type="FunFam" id="2.40.30.10:FF:000001">
    <property type="entry name" value="Elongation factor Tu"/>
    <property type="match status" value="1"/>
</dbReference>
<dbReference type="FunFam" id="3.40.50.300:FF:000003">
    <property type="entry name" value="Elongation factor Tu"/>
    <property type="match status" value="1"/>
</dbReference>
<dbReference type="Gene3D" id="3.40.50.300">
    <property type="entry name" value="P-loop containing nucleotide triphosphate hydrolases"/>
    <property type="match status" value="1"/>
</dbReference>
<dbReference type="Gene3D" id="2.40.30.10">
    <property type="entry name" value="Translation factors"/>
    <property type="match status" value="2"/>
</dbReference>
<dbReference type="HAMAP" id="MF_00118_B">
    <property type="entry name" value="EF_Tu_B"/>
    <property type="match status" value="1"/>
</dbReference>
<dbReference type="InterPro" id="IPR041709">
    <property type="entry name" value="EF-Tu_GTP-bd"/>
</dbReference>
<dbReference type="InterPro" id="IPR050055">
    <property type="entry name" value="EF-Tu_GTPase"/>
</dbReference>
<dbReference type="InterPro" id="IPR004161">
    <property type="entry name" value="EFTu-like_2"/>
</dbReference>
<dbReference type="InterPro" id="IPR033720">
    <property type="entry name" value="EFTU_2"/>
</dbReference>
<dbReference type="InterPro" id="IPR031157">
    <property type="entry name" value="G_TR_CS"/>
</dbReference>
<dbReference type="InterPro" id="IPR027417">
    <property type="entry name" value="P-loop_NTPase"/>
</dbReference>
<dbReference type="InterPro" id="IPR005225">
    <property type="entry name" value="Small_GTP-bd"/>
</dbReference>
<dbReference type="InterPro" id="IPR000795">
    <property type="entry name" value="T_Tr_GTP-bd_dom"/>
</dbReference>
<dbReference type="InterPro" id="IPR009000">
    <property type="entry name" value="Transl_B-barrel_sf"/>
</dbReference>
<dbReference type="InterPro" id="IPR009001">
    <property type="entry name" value="Transl_elong_EF1A/Init_IF2_C"/>
</dbReference>
<dbReference type="InterPro" id="IPR004541">
    <property type="entry name" value="Transl_elong_EFTu/EF1A_bac/org"/>
</dbReference>
<dbReference type="InterPro" id="IPR004160">
    <property type="entry name" value="Transl_elong_EFTu/EF1A_C"/>
</dbReference>
<dbReference type="NCBIfam" id="TIGR00485">
    <property type="entry name" value="EF-Tu"/>
    <property type="match status" value="1"/>
</dbReference>
<dbReference type="NCBIfam" id="NF000766">
    <property type="entry name" value="PRK00049.1"/>
    <property type="match status" value="1"/>
</dbReference>
<dbReference type="NCBIfam" id="NF009372">
    <property type="entry name" value="PRK12735.1"/>
    <property type="match status" value="1"/>
</dbReference>
<dbReference type="NCBIfam" id="NF009373">
    <property type="entry name" value="PRK12736.1"/>
    <property type="match status" value="1"/>
</dbReference>
<dbReference type="NCBIfam" id="TIGR00231">
    <property type="entry name" value="small_GTP"/>
    <property type="match status" value="1"/>
</dbReference>
<dbReference type="PANTHER" id="PTHR43721:SF22">
    <property type="entry name" value="ELONGATION FACTOR TU, MITOCHONDRIAL"/>
    <property type="match status" value="1"/>
</dbReference>
<dbReference type="PANTHER" id="PTHR43721">
    <property type="entry name" value="ELONGATION FACTOR TU-RELATED"/>
    <property type="match status" value="1"/>
</dbReference>
<dbReference type="Pfam" id="PF00009">
    <property type="entry name" value="GTP_EFTU"/>
    <property type="match status" value="1"/>
</dbReference>
<dbReference type="Pfam" id="PF03144">
    <property type="entry name" value="GTP_EFTU_D2"/>
    <property type="match status" value="1"/>
</dbReference>
<dbReference type="Pfam" id="PF03143">
    <property type="entry name" value="GTP_EFTU_D3"/>
    <property type="match status" value="1"/>
</dbReference>
<dbReference type="PRINTS" id="PR00315">
    <property type="entry name" value="ELONGATNFCT"/>
</dbReference>
<dbReference type="SUPFAM" id="SSF50465">
    <property type="entry name" value="EF-Tu/eEF-1alpha/eIF2-gamma C-terminal domain"/>
    <property type="match status" value="1"/>
</dbReference>
<dbReference type="SUPFAM" id="SSF52540">
    <property type="entry name" value="P-loop containing nucleoside triphosphate hydrolases"/>
    <property type="match status" value="1"/>
</dbReference>
<dbReference type="SUPFAM" id="SSF50447">
    <property type="entry name" value="Translation proteins"/>
    <property type="match status" value="1"/>
</dbReference>
<dbReference type="PROSITE" id="PS00301">
    <property type="entry name" value="G_TR_1"/>
    <property type="match status" value="1"/>
</dbReference>
<dbReference type="PROSITE" id="PS51722">
    <property type="entry name" value="G_TR_2"/>
    <property type="match status" value="1"/>
</dbReference>
<organism>
    <name type="scientific">Pelotomaculum thermopropionicum (strain DSM 13744 / JCM 10971 / SI)</name>
    <dbReference type="NCBI Taxonomy" id="370438"/>
    <lineage>
        <taxon>Bacteria</taxon>
        <taxon>Bacillati</taxon>
        <taxon>Bacillota</taxon>
        <taxon>Clostridia</taxon>
        <taxon>Eubacteriales</taxon>
        <taxon>Desulfotomaculaceae</taxon>
        <taxon>Pelotomaculum</taxon>
    </lineage>
</organism>
<feature type="chain" id="PRO_0000337459" description="Elongation factor Tu 2">
    <location>
        <begin position="1"/>
        <end position="400"/>
    </location>
</feature>
<feature type="domain" description="tr-type G">
    <location>
        <begin position="10"/>
        <end position="209"/>
    </location>
</feature>
<feature type="region of interest" description="G1" evidence="1">
    <location>
        <begin position="19"/>
        <end position="26"/>
    </location>
</feature>
<feature type="region of interest" description="G2" evidence="1">
    <location>
        <begin position="60"/>
        <end position="64"/>
    </location>
</feature>
<feature type="region of interest" description="G3" evidence="1">
    <location>
        <begin position="81"/>
        <end position="84"/>
    </location>
</feature>
<feature type="region of interest" description="G4" evidence="1">
    <location>
        <begin position="136"/>
        <end position="139"/>
    </location>
</feature>
<feature type="region of interest" description="G5" evidence="1">
    <location>
        <begin position="174"/>
        <end position="176"/>
    </location>
</feature>
<feature type="binding site" evidence="2">
    <location>
        <begin position="19"/>
        <end position="26"/>
    </location>
    <ligand>
        <name>GTP</name>
        <dbReference type="ChEBI" id="CHEBI:37565"/>
    </ligand>
</feature>
<feature type="binding site" evidence="2">
    <location>
        <position position="26"/>
    </location>
    <ligand>
        <name>Mg(2+)</name>
        <dbReference type="ChEBI" id="CHEBI:18420"/>
    </ligand>
</feature>
<feature type="binding site" evidence="2">
    <location>
        <begin position="81"/>
        <end position="85"/>
    </location>
    <ligand>
        <name>GTP</name>
        <dbReference type="ChEBI" id="CHEBI:37565"/>
    </ligand>
</feature>
<feature type="binding site" evidence="2">
    <location>
        <begin position="136"/>
        <end position="139"/>
    </location>
    <ligand>
        <name>GTP</name>
        <dbReference type="ChEBI" id="CHEBI:37565"/>
    </ligand>
</feature>